<comment type="function">
    <text evidence="1">Catalyzes the phosphorylation of N-acetyl-D-glucosamine (GlcNAc) derived from cell-wall degradation, yielding GlcNAc-6-P.</text>
</comment>
<comment type="catalytic activity">
    <reaction evidence="1">
        <text>N-acetyl-D-glucosamine + ATP = N-acetyl-D-glucosamine 6-phosphate + ADP + H(+)</text>
        <dbReference type="Rhea" id="RHEA:17417"/>
        <dbReference type="ChEBI" id="CHEBI:15378"/>
        <dbReference type="ChEBI" id="CHEBI:30616"/>
        <dbReference type="ChEBI" id="CHEBI:57513"/>
        <dbReference type="ChEBI" id="CHEBI:456216"/>
        <dbReference type="ChEBI" id="CHEBI:506227"/>
        <dbReference type="EC" id="2.7.1.59"/>
    </reaction>
</comment>
<comment type="pathway">
    <text evidence="1">Cell wall biogenesis; peptidoglycan recycling.</text>
</comment>
<comment type="similarity">
    <text evidence="1">Belongs to the ROK (NagC/XylR) family. NagK subfamily.</text>
</comment>
<reference key="1">
    <citation type="journal article" date="2009" name="PLoS Genet.">
        <title>Organised genome dynamics in the Escherichia coli species results in highly diverse adaptive paths.</title>
        <authorList>
            <person name="Touchon M."/>
            <person name="Hoede C."/>
            <person name="Tenaillon O."/>
            <person name="Barbe V."/>
            <person name="Baeriswyl S."/>
            <person name="Bidet P."/>
            <person name="Bingen E."/>
            <person name="Bonacorsi S."/>
            <person name="Bouchier C."/>
            <person name="Bouvet O."/>
            <person name="Calteau A."/>
            <person name="Chiapello H."/>
            <person name="Clermont O."/>
            <person name="Cruveiller S."/>
            <person name="Danchin A."/>
            <person name="Diard M."/>
            <person name="Dossat C."/>
            <person name="Karoui M.E."/>
            <person name="Frapy E."/>
            <person name="Garry L."/>
            <person name="Ghigo J.M."/>
            <person name="Gilles A.M."/>
            <person name="Johnson J."/>
            <person name="Le Bouguenec C."/>
            <person name="Lescat M."/>
            <person name="Mangenot S."/>
            <person name="Martinez-Jehanne V."/>
            <person name="Matic I."/>
            <person name="Nassif X."/>
            <person name="Oztas S."/>
            <person name="Petit M.A."/>
            <person name="Pichon C."/>
            <person name="Rouy Z."/>
            <person name="Ruf C.S."/>
            <person name="Schneider D."/>
            <person name="Tourret J."/>
            <person name="Vacherie B."/>
            <person name="Vallenet D."/>
            <person name="Medigue C."/>
            <person name="Rocha E.P.C."/>
            <person name="Denamur E."/>
        </authorList>
    </citation>
    <scope>NUCLEOTIDE SEQUENCE [LARGE SCALE GENOMIC DNA]</scope>
    <source>
        <strain>IAI39 / ExPEC</strain>
    </source>
</reference>
<evidence type="ECO:0000255" key="1">
    <source>
        <dbReference type="HAMAP-Rule" id="MF_01271"/>
    </source>
</evidence>
<protein>
    <recommendedName>
        <fullName evidence="1">N-acetyl-D-glucosamine kinase</fullName>
        <ecNumber evidence="1">2.7.1.59</ecNumber>
    </recommendedName>
    <alternativeName>
        <fullName evidence="1">GlcNAc kinase</fullName>
    </alternativeName>
</protein>
<accession>B7NKG0</accession>
<keyword id="KW-0067">ATP-binding</keyword>
<keyword id="KW-0119">Carbohydrate metabolism</keyword>
<keyword id="KW-0418">Kinase</keyword>
<keyword id="KW-0479">Metal-binding</keyword>
<keyword id="KW-0547">Nucleotide-binding</keyword>
<keyword id="KW-0808">Transferase</keyword>
<keyword id="KW-0862">Zinc</keyword>
<feature type="chain" id="PRO_1000140182" description="N-acetyl-D-glucosamine kinase">
    <location>
        <begin position="1"/>
        <end position="303"/>
    </location>
</feature>
<feature type="binding site" evidence="1">
    <location>
        <begin position="4"/>
        <end position="11"/>
    </location>
    <ligand>
        <name>ATP</name>
        <dbReference type="ChEBI" id="CHEBI:30616"/>
    </ligand>
</feature>
<feature type="binding site" evidence="1">
    <location>
        <begin position="133"/>
        <end position="140"/>
    </location>
    <ligand>
        <name>ATP</name>
        <dbReference type="ChEBI" id="CHEBI:30616"/>
    </ligand>
</feature>
<feature type="binding site" evidence="1">
    <location>
        <position position="157"/>
    </location>
    <ligand>
        <name>Zn(2+)</name>
        <dbReference type="ChEBI" id="CHEBI:29105"/>
    </ligand>
</feature>
<feature type="binding site" evidence="1">
    <location>
        <position position="177"/>
    </location>
    <ligand>
        <name>Zn(2+)</name>
        <dbReference type="ChEBI" id="CHEBI:29105"/>
    </ligand>
</feature>
<feature type="binding site" evidence="1">
    <location>
        <position position="179"/>
    </location>
    <ligand>
        <name>Zn(2+)</name>
        <dbReference type="ChEBI" id="CHEBI:29105"/>
    </ligand>
</feature>
<feature type="binding site" evidence="1">
    <location>
        <position position="184"/>
    </location>
    <ligand>
        <name>Zn(2+)</name>
        <dbReference type="ChEBI" id="CHEBI:29105"/>
    </ligand>
</feature>
<proteinExistence type="inferred from homology"/>
<gene>
    <name evidence="1" type="primary">nagK</name>
    <name type="ordered locus">ECIAI39_2041</name>
</gene>
<dbReference type="EC" id="2.7.1.59" evidence="1"/>
<dbReference type="EMBL" id="CU928164">
    <property type="protein sequence ID" value="CAR18168.1"/>
    <property type="molecule type" value="Genomic_DNA"/>
</dbReference>
<dbReference type="RefSeq" id="WP_000291288.1">
    <property type="nucleotide sequence ID" value="NC_011750.1"/>
</dbReference>
<dbReference type="RefSeq" id="YP_002408008.1">
    <property type="nucleotide sequence ID" value="NC_011750.1"/>
</dbReference>
<dbReference type="SMR" id="B7NKG0"/>
<dbReference type="STRING" id="585057.ECIAI39_2041"/>
<dbReference type="KEGG" id="ect:ECIAI39_2041"/>
<dbReference type="PATRIC" id="fig|585057.6.peg.2121"/>
<dbReference type="HOGENOM" id="CLU_036604_0_3_6"/>
<dbReference type="UniPathway" id="UPA00544"/>
<dbReference type="Proteomes" id="UP000000749">
    <property type="component" value="Chromosome"/>
</dbReference>
<dbReference type="GO" id="GO:0005524">
    <property type="term" value="F:ATP binding"/>
    <property type="evidence" value="ECO:0007669"/>
    <property type="project" value="UniProtKB-UniRule"/>
</dbReference>
<dbReference type="GO" id="GO:0045127">
    <property type="term" value="F:N-acetylglucosamine kinase activity"/>
    <property type="evidence" value="ECO:0007669"/>
    <property type="project" value="UniProtKB-UniRule"/>
</dbReference>
<dbReference type="GO" id="GO:0008270">
    <property type="term" value="F:zinc ion binding"/>
    <property type="evidence" value="ECO:0007669"/>
    <property type="project" value="UniProtKB-UniRule"/>
</dbReference>
<dbReference type="GO" id="GO:0006044">
    <property type="term" value="P:N-acetylglucosamine metabolic process"/>
    <property type="evidence" value="ECO:0007669"/>
    <property type="project" value="UniProtKB-UniRule"/>
</dbReference>
<dbReference type="GO" id="GO:0009254">
    <property type="term" value="P:peptidoglycan turnover"/>
    <property type="evidence" value="ECO:0007669"/>
    <property type="project" value="UniProtKB-UniRule"/>
</dbReference>
<dbReference type="CDD" id="cd24057">
    <property type="entry name" value="ASKHA_NBD_ROK_NAGK"/>
    <property type="match status" value="1"/>
</dbReference>
<dbReference type="FunFam" id="3.30.420.40:FF:000049">
    <property type="entry name" value="N-acetyl-D-glucosamine kinase"/>
    <property type="match status" value="1"/>
</dbReference>
<dbReference type="FunFam" id="3.30.420.40:FF:000051">
    <property type="entry name" value="N-acetyl-D-glucosamine kinase"/>
    <property type="match status" value="1"/>
</dbReference>
<dbReference type="Gene3D" id="3.30.420.40">
    <property type="match status" value="2"/>
</dbReference>
<dbReference type="HAMAP" id="MF_01271">
    <property type="entry name" value="GlcNAc_kinase"/>
    <property type="match status" value="1"/>
</dbReference>
<dbReference type="InterPro" id="IPR043129">
    <property type="entry name" value="ATPase_NBD"/>
</dbReference>
<dbReference type="InterPro" id="IPR023505">
    <property type="entry name" value="N-acetyl-D-glucosamine_kinase"/>
</dbReference>
<dbReference type="InterPro" id="IPR000600">
    <property type="entry name" value="ROK"/>
</dbReference>
<dbReference type="InterPro" id="IPR049874">
    <property type="entry name" value="ROK_cs"/>
</dbReference>
<dbReference type="NCBIfam" id="NF009835">
    <property type="entry name" value="PRK13310.1"/>
    <property type="match status" value="1"/>
</dbReference>
<dbReference type="PANTHER" id="PTHR18964:SF162">
    <property type="entry name" value="N-ACETYL-D-GLUCOSAMINE KINASE"/>
    <property type="match status" value="1"/>
</dbReference>
<dbReference type="PANTHER" id="PTHR18964">
    <property type="entry name" value="ROK (REPRESSOR, ORF, KINASE) FAMILY"/>
    <property type="match status" value="1"/>
</dbReference>
<dbReference type="Pfam" id="PF00480">
    <property type="entry name" value="ROK"/>
    <property type="match status" value="1"/>
</dbReference>
<dbReference type="SUPFAM" id="SSF53067">
    <property type="entry name" value="Actin-like ATPase domain"/>
    <property type="match status" value="1"/>
</dbReference>
<dbReference type="PROSITE" id="PS01125">
    <property type="entry name" value="ROK"/>
    <property type="match status" value="1"/>
</dbReference>
<organism>
    <name type="scientific">Escherichia coli O7:K1 (strain IAI39 / ExPEC)</name>
    <dbReference type="NCBI Taxonomy" id="585057"/>
    <lineage>
        <taxon>Bacteria</taxon>
        <taxon>Pseudomonadati</taxon>
        <taxon>Pseudomonadota</taxon>
        <taxon>Gammaproteobacteria</taxon>
        <taxon>Enterobacterales</taxon>
        <taxon>Enterobacteriaceae</taxon>
        <taxon>Escherichia</taxon>
    </lineage>
</organism>
<sequence length="303" mass="33059">MYYGFDIGGTKIALGVFDSGRQLQWEKRVPTPRDSYDAFLDAVCELVAEADQRFGCKGSVGIGIPGMPETEDGTLYASNVPAASGKPLRADLSARLDRDVRLDNDANCFALSEAWDDEFTQYPLVMGLILGTGVGGGLIFNGKPITGKSYITGEFGHMRLPVDALTMMGLDFPLRRCGCGQHGCIENYLSGRGFAWLYQHYYHQPLQAPEIIALYDQGDEQARAHVERYLDLLAVCLGNILTIVDPDLVVIGGGLSNFPAITTQLADRLPRHLLPVARVPRIERARHGDAGGMRGAAFLHLTD</sequence>
<name>NAGK_ECO7I</name>